<dbReference type="EC" id="2.7.2.3"/>
<dbReference type="EMBL" id="L43967">
    <property type="protein sequence ID" value="AAC71522.2"/>
    <property type="molecule type" value="Genomic_DNA"/>
</dbReference>
<dbReference type="EMBL" id="U02226">
    <property type="protein sequence ID" value="AAA03379.1"/>
    <property type="molecule type" value="Genomic_DNA"/>
</dbReference>
<dbReference type="EMBL" id="U02234">
    <property type="protein sequence ID" value="AAA03386.1"/>
    <property type="molecule type" value="Genomic_DNA"/>
</dbReference>
<dbReference type="EMBL" id="U02178">
    <property type="protein sequence ID" value="AAD12464.1"/>
    <property type="status" value="ALT_INIT"/>
    <property type="molecule type" value="Genomic_DNA"/>
</dbReference>
<dbReference type="PIR" id="B64233">
    <property type="entry name" value="B64233"/>
</dbReference>
<dbReference type="RefSeq" id="WP_010869417.1">
    <property type="nucleotide sequence ID" value="NC_000908.2"/>
</dbReference>
<dbReference type="SMR" id="P47542"/>
<dbReference type="FunCoup" id="P47542">
    <property type="interactions" value="173"/>
</dbReference>
<dbReference type="STRING" id="243273.MG_300"/>
<dbReference type="GeneID" id="88282463"/>
<dbReference type="KEGG" id="mge:MG_300"/>
<dbReference type="eggNOG" id="COG0126">
    <property type="taxonomic scope" value="Bacteria"/>
</dbReference>
<dbReference type="HOGENOM" id="CLU_025427_0_2_14"/>
<dbReference type="InParanoid" id="P47542"/>
<dbReference type="OrthoDB" id="9808460at2"/>
<dbReference type="UniPathway" id="UPA00109">
    <property type="reaction ID" value="UER00185"/>
</dbReference>
<dbReference type="Proteomes" id="UP000000807">
    <property type="component" value="Chromosome"/>
</dbReference>
<dbReference type="GO" id="GO:0005829">
    <property type="term" value="C:cytosol"/>
    <property type="evidence" value="ECO:0000318"/>
    <property type="project" value="GO_Central"/>
</dbReference>
<dbReference type="GO" id="GO:0043531">
    <property type="term" value="F:ADP binding"/>
    <property type="evidence" value="ECO:0000318"/>
    <property type="project" value="GO_Central"/>
</dbReference>
<dbReference type="GO" id="GO:0005524">
    <property type="term" value="F:ATP binding"/>
    <property type="evidence" value="ECO:0000318"/>
    <property type="project" value="GO_Central"/>
</dbReference>
<dbReference type="GO" id="GO:0004618">
    <property type="term" value="F:phosphoglycerate kinase activity"/>
    <property type="evidence" value="ECO:0000318"/>
    <property type="project" value="GO_Central"/>
</dbReference>
<dbReference type="GO" id="GO:0006094">
    <property type="term" value="P:gluconeogenesis"/>
    <property type="evidence" value="ECO:0000318"/>
    <property type="project" value="GO_Central"/>
</dbReference>
<dbReference type="GO" id="GO:0006096">
    <property type="term" value="P:glycolytic process"/>
    <property type="evidence" value="ECO:0000318"/>
    <property type="project" value="GO_Central"/>
</dbReference>
<dbReference type="FunFam" id="3.40.50.1260:FF:000007">
    <property type="entry name" value="Phosphoglycerate kinase"/>
    <property type="match status" value="1"/>
</dbReference>
<dbReference type="Gene3D" id="3.40.50.1260">
    <property type="entry name" value="Phosphoglycerate kinase, N-terminal domain"/>
    <property type="match status" value="2"/>
</dbReference>
<dbReference type="HAMAP" id="MF_00145">
    <property type="entry name" value="Phosphoglyc_kinase"/>
    <property type="match status" value="1"/>
</dbReference>
<dbReference type="InterPro" id="IPR001576">
    <property type="entry name" value="Phosphoglycerate_kinase"/>
</dbReference>
<dbReference type="InterPro" id="IPR015911">
    <property type="entry name" value="Phosphoglycerate_kinase_CS"/>
</dbReference>
<dbReference type="InterPro" id="IPR015824">
    <property type="entry name" value="Phosphoglycerate_kinase_N"/>
</dbReference>
<dbReference type="InterPro" id="IPR036043">
    <property type="entry name" value="Phosphoglycerate_kinase_sf"/>
</dbReference>
<dbReference type="PANTHER" id="PTHR11406">
    <property type="entry name" value="PHOSPHOGLYCERATE KINASE"/>
    <property type="match status" value="1"/>
</dbReference>
<dbReference type="PANTHER" id="PTHR11406:SF23">
    <property type="entry name" value="PHOSPHOGLYCERATE KINASE 1, CHLOROPLASTIC-RELATED"/>
    <property type="match status" value="1"/>
</dbReference>
<dbReference type="Pfam" id="PF00162">
    <property type="entry name" value="PGK"/>
    <property type="match status" value="1"/>
</dbReference>
<dbReference type="PIRSF" id="PIRSF000724">
    <property type="entry name" value="Pgk"/>
    <property type="match status" value="1"/>
</dbReference>
<dbReference type="PRINTS" id="PR00477">
    <property type="entry name" value="PHGLYCKINASE"/>
</dbReference>
<dbReference type="SUPFAM" id="SSF53748">
    <property type="entry name" value="Phosphoglycerate kinase"/>
    <property type="match status" value="1"/>
</dbReference>
<dbReference type="PROSITE" id="PS00111">
    <property type="entry name" value="PGLYCERATE_KINASE"/>
    <property type="match status" value="1"/>
</dbReference>
<organism>
    <name type="scientific">Mycoplasma genitalium (strain ATCC 33530 / DSM 19775 / NCTC 10195 / G37)</name>
    <name type="common">Mycoplasmoides genitalium</name>
    <dbReference type="NCBI Taxonomy" id="243273"/>
    <lineage>
        <taxon>Bacteria</taxon>
        <taxon>Bacillati</taxon>
        <taxon>Mycoplasmatota</taxon>
        <taxon>Mycoplasmoidales</taxon>
        <taxon>Mycoplasmoidaceae</taxon>
        <taxon>Mycoplasmoides</taxon>
    </lineage>
</organism>
<protein>
    <recommendedName>
        <fullName>Phosphoglycerate kinase</fullName>
        <ecNumber>2.7.2.3</ecNumber>
    </recommendedName>
</protein>
<feature type="chain" id="PRO_0000145965" description="Phosphoglycerate kinase">
    <location>
        <begin position="1"/>
        <end position="411"/>
    </location>
</feature>
<feature type="binding site" evidence="1">
    <location>
        <begin position="22"/>
        <end position="24"/>
    </location>
    <ligand>
        <name>substrate</name>
    </ligand>
</feature>
<feature type="binding site" evidence="1">
    <location>
        <position position="37"/>
    </location>
    <ligand>
        <name>substrate</name>
    </ligand>
</feature>
<feature type="binding site" evidence="1">
    <location>
        <begin position="60"/>
        <end position="63"/>
    </location>
    <ligand>
        <name>substrate</name>
    </ligand>
</feature>
<feature type="binding site" evidence="1">
    <location>
        <position position="123"/>
    </location>
    <ligand>
        <name>substrate</name>
    </ligand>
</feature>
<feature type="binding site" evidence="1">
    <location>
        <position position="165"/>
    </location>
    <ligand>
        <name>substrate</name>
    </ligand>
</feature>
<feature type="binding site" evidence="1">
    <location>
        <position position="216"/>
    </location>
    <ligand>
        <name>ATP</name>
        <dbReference type="ChEBI" id="CHEBI:30616"/>
    </ligand>
</feature>
<feature type="binding site" evidence="1">
    <location>
        <position position="339"/>
    </location>
    <ligand>
        <name>ATP</name>
        <dbReference type="ChEBI" id="CHEBI:30616"/>
    </ligand>
</feature>
<feature type="binding site" evidence="1">
    <location>
        <begin position="366"/>
        <end position="369"/>
    </location>
    <ligand>
        <name>ATP</name>
        <dbReference type="ChEBI" id="CHEBI:30616"/>
    </ligand>
</feature>
<feature type="sequence conflict" description="In Ref. 2; AAA03379." evidence="3" ref="2">
    <original>SPQ</original>
    <variation>KPT</variation>
    <location>
        <begin position="199"/>
        <end position="201"/>
    </location>
</feature>
<comment type="catalytic activity">
    <reaction>
        <text>(2R)-3-phosphoglycerate + ATP = (2R)-3-phospho-glyceroyl phosphate + ADP</text>
        <dbReference type="Rhea" id="RHEA:14801"/>
        <dbReference type="ChEBI" id="CHEBI:30616"/>
        <dbReference type="ChEBI" id="CHEBI:57604"/>
        <dbReference type="ChEBI" id="CHEBI:58272"/>
        <dbReference type="ChEBI" id="CHEBI:456216"/>
        <dbReference type="EC" id="2.7.2.3"/>
    </reaction>
</comment>
<comment type="pathway">
    <text>Carbohydrate degradation; glycolysis; pyruvate from D-glyceraldehyde 3-phosphate: step 2/5.</text>
</comment>
<comment type="subunit">
    <text evidence="1">Monomer.</text>
</comment>
<comment type="subcellular location">
    <subcellularLocation>
        <location>Cytoplasm</location>
    </subcellularLocation>
</comment>
<comment type="disruption phenotype">
    <text evidence="2">Probably essential, it was not disrupted in a global transposon mutagenesis study.</text>
</comment>
<comment type="similarity">
    <text evidence="3">Belongs to the phosphoglycerate kinase family.</text>
</comment>
<comment type="sequence caution" evidence="3">
    <conflict type="erroneous initiation">
        <sequence resource="EMBL-CDS" id="AAD12464"/>
    </conflict>
    <text>Extended N-terminus.</text>
</comment>
<proteinExistence type="inferred from homology"/>
<name>PGK_MYCGE</name>
<reference key="1">
    <citation type="journal article" date="1995" name="Science">
        <title>The minimal gene complement of Mycoplasma genitalium.</title>
        <authorList>
            <person name="Fraser C.M."/>
            <person name="Gocayne J.D."/>
            <person name="White O."/>
            <person name="Adams M.D."/>
            <person name="Clayton R.A."/>
            <person name="Fleischmann R.D."/>
            <person name="Bult C.J."/>
            <person name="Kerlavage A.R."/>
            <person name="Sutton G.G."/>
            <person name="Kelley J.M."/>
            <person name="Fritchman J.L."/>
            <person name="Weidman J.F."/>
            <person name="Small K.V."/>
            <person name="Sandusky M."/>
            <person name="Fuhrmann J.L."/>
            <person name="Nguyen D.T."/>
            <person name="Utterback T.R."/>
            <person name="Saudek D.M."/>
            <person name="Phillips C.A."/>
            <person name="Merrick J.M."/>
            <person name="Tomb J.-F."/>
            <person name="Dougherty B.A."/>
            <person name="Bott K.F."/>
            <person name="Hu P.-C."/>
            <person name="Lucier T.S."/>
            <person name="Peterson S.N."/>
            <person name="Smith H.O."/>
            <person name="Hutchison C.A. III"/>
            <person name="Venter J.C."/>
        </authorList>
    </citation>
    <scope>NUCLEOTIDE SEQUENCE [LARGE SCALE GENOMIC DNA]</scope>
    <source>
        <strain>ATCC 33530 / DSM 19775 / NCTC 10195 / G37</strain>
    </source>
</reference>
<reference key="2">
    <citation type="journal article" date="1993" name="J. Bacteriol.">
        <title>A survey of the Mycoplasma genitalium genome by using random sequencing.</title>
        <authorList>
            <person name="Peterson S.N."/>
            <person name="Hu P.-C."/>
            <person name="Bott K.F."/>
            <person name="Hutchison C.A. III"/>
        </authorList>
    </citation>
    <scope>NUCLEOTIDE SEQUENCE [GENOMIC DNA] OF 1-50; 199-306 AND 309-409</scope>
    <source>
        <strain>ATCC 33530 / DSM 19775 / NCTC 10195 / G37</strain>
    </source>
</reference>
<reference key="3">
    <citation type="journal article" date="2006" name="Proc. Natl. Acad. Sci. U.S.A.">
        <title>Essential genes of a minimal bacterium.</title>
        <authorList>
            <person name="Glass J.I."/>
            <person name="Assad-Garcia N."/>
            <person name="Alperovich N."/>
            <person name="Yooseph S."/>
            <person name="Lewis M.R."/>
            <person name="Maruf M."/>
            <person name="Hutchison C.A. III"/>
            <person name="Smith H.O."/>
            <person name="Venter J.C."/>
        </authorList>
    </citation>
    <scope>SEQUENCE REVISION</scope>
    <scope>DISRUPTION PHENOTYPE</scope>
    <source>
        <strain>ATCC 33530 / DSM 19775 / NCTC 10195 / G37</strain>
    </source>
</reference>
<accession>P47542</accession>
<accession>Q49338</accession>
<accession>Q59521</accession>
<gene>
    <name type="primary">pgk</name>
    <name type="ordered locus">MG300</name>
</gene>
<evidence type="ECO:0000250" key="1"/>
<evidence type="ECO:0000269" key="2">
    <source>
    </source>
</evidence>
<evidence type="ECO:0000305" key="3"/>
<sequence length="411" mass="44847">MLNFKTLQAIDFQNKTVVLRSDFNVPMINGVISDSERILAGLDTIKFLVKKNCKIVLLSHLSRIKSLEDKLNNKKSLKPVAELLQQLLPTVKVQFSCKNTGAEVKQKVQALAFGEILLLENTRYCDVNDKGEIVKLESKNDPELAKFWASLGEIFVNDAFGTAHRKHASNAGIAKYVAKSCIGFLMEKELKNLSYLIQSPQKPFVVVLGGAKVSDKLKVVENLLKLADNILIGGGMVNTFLKAKGKATANSLVEKELIDVAKQILDKDTHNKIVLAIDQVMGSEFKDQTGITLDVSDKIQEQYQSYMSLDVGSKTIALFESYLKTAKTIFWNGPLGVFEFTNFAKGTSKIGEIIAKNKTAFSVIGGGDSAAAVKQMQLSDQFSFISTGGGASLALIGGEELVGISDIQKNS</sequence>
<keyword id="KW-0067">ATP-binding</keyword>
<keyword id="KW-0963">Cytoplasm</keyword>
<keyword id="KW-0324">Glycolysis</keyword>
<keyword id="KW-0418">Kinase</keyword>
<keyword id="KW-0547">Nucleotide-binding</keyword>
<keyword id="KW-1185">Reference proteome</keyword>
<keyword id="KW-0808">Transferase</keyword>